<sequence length="423" mass="47748">MEKTPAETTAVSAGNVPRDSIPCITNVSADTRGRTRPSRPATVPQRRPARIGHFRRRSASLSFLDWPDDSVTEGVRTTSASVAASAARFDEIRRRRQSINDEMKERTLEDALAVELVNETFRCSVTSDARKDLQKLVRRVSGTVLRLSWPNGWFFTYCDLLRVGYFGHLNIKGLEKTFLCCDKFLLPVGTVSRCEAIGRPPLPVLIGEGGRVYVYSPVVESLYLVSRSGFRGFVQEGLRNYAPLREELGYVRFETGGDVGREFMLARDLLALWRLCMKREGSIFSWRDGNEALTTVVLNGSQTYEDPAHGNWLKETCSLNVLQVFVVRAVPVESQQRLDISILVNESGAVFGVHPDTRQAHFLARGLLGFFRVGFLRFCNNYCFARDCFTHPESVAPAYRATGCPRELFCRRLRKKKGLFARR</sequence>
<organismHost>
    <name type="scientific">Homo sapiens</name>
    <name type="common">Human</name>
    <dbReference type="NCBI Taxonomy" id="9606"/>
</organismHost>
<dbReference type="EMBL" id="AY446894">
    <property type="protein sequence ID" value="AAR31607.1"/>
    <property type="molecule type" value="Genomic_DNA"/>
</dbReference>
<dbReference type="RefSeq" id="YP_081501.1">
    <property type="nucleotide sequence ID" value="NC_006273.2"/>
</dbReference>
<dbReference type="DNASU" id="3077512"/>
<dbReference type="GeneID" id="3077512"/>
<dbReference type="KEGG" id="vg:3077512"/>
<dbReference type="Reactome" id="R-HSA-9609690">
    <property type="pathway name" value="HCMV Early Events"/>
</dbReference>
<dbReference type="Reactome" id="R-HSA-9610379">
    <property type="pathway name" value="HCMV Late Events"/>
</dbReference>
<dbReference type="Proteomes" id="UP000000938">
    <property type="component" value="Segment"/>
</dbReference>
<dbReference type="GO" id="GO:0019033">
    <property type="term" value="C:viral tegument"/>
    <property type="evidence" value="ECO:0000304"/>
    <property type="project" value="Reactome"/>
</dbReference>
<dbReference type="InterPro" id="IPR003360">
    <property type="entry name" value="US22-like"/>
</dbReference>
<dbReference type="Pfam" id="PF02393">
    <property type="entry name" value="US22"/>
    <property type="match status" value="2"/>
</dbReference>
<keyword id="KW-1185">Reference proteome</keyword>
<keyword id="KW-0946">Virion</keyword>
<keyword id="KW-0920">Virion tegument</keyword>
<name>UL43_HCMVM</name>
<gene>
    <name type="primary">UL43</name>
</gene>
<evidence type="ECO:0000250" key="1"/>
<evidence type="ECO:0000256" key="2">
    <source>
        <dbReference type="SAM" id="MobiDB-lite"/>
    </source>
</evidence>
<evidence type="ECO:0000305" key="3"/>
<accession>Q6SW89</accession>
<accession>D2K3L0</accession>
<proteinExistence type="inferred from homology"/>
<organism>
    <name type="scientific">Human cytomegalovirus (strain Merlin)</name>
    <name type="common">HHV-5</name>
    <name type="synonym">Human herpesvirus 5</name>
    <dbReference type="NCBI Taxonomy" id="295027"/>
    <lineage>
        <taxon>Viruses</taxon>
        <taxon>Duplodnaviria</taxon>
        <taxon>Heunggongvirae</taxon>
        <taxon>Peploviricota</taxon>
        <taxon>Herviviricetes</taxon>
        <taxon>Herpesvirales</taxon>
        <taxon>Orthoherpesviridae</taxon>
        <taxon>Betaherpesvirinae</taxon>
        <taxon>Cytomegalovirus</taxon>
        <taxon>Cytomegalovirus humanbeta5</taxon>
        <taxon>Human cytomegalovirus</taxon>
    </lineage>
</organism>
<protein>
    <recommendedName>
        <fullName>Tegument protein UL43</fullName>
    </recommendedName>
</protein>
<comment type="subcellular location">
    <subcellularLocation>
        <location evidence="1">Virion tegument</location>
    </subcellularLocation>
</comment>
<comment type="similarity">
    <text evidence="3">Belongs to the herpesviridae US22 family.</text>
</comment>
<feature type="chain" id="PRO_0000416718" description="Tegument protein UL43">
    <location>
        <begin position="1"/>
        <end position="423"/>
    </location>
</feature>
<feature type="region of interest" description="Disordered" evidence="2">
    <location>
        <begin position="1"/>
        <end position="46"/>
    </location>
</feature>
<feature type="compositionally biased region" description="Polar residues" evidence="2">
    <location>
        <begin position="1"/>
        <end position="12"/>
    </location>
</feature>
<reference key="1">
    <citation type="journal article" date="2004" name="J. Gen. Virol.">
        <title>Genetic content of wild-type human cytomegalovirus.</title>
        <authorList>
            <person name="Dolan A."/>
            <person name="Cunningham C."/>
            <person name="Hector R.D."/>
            <person name="Hassan-Walker A.F."/>
            <person name="Lee L."/>
            <person name="Addison C."/>
            <person name="Dargan D.J."/>
            <person name="McGeoch D.J."/>
            <person name="Gatherer D."/>
            <person name="Emery V.C."/>
            <person name="Griffiths P.D."/>
            <person name="Sinzger C."/>
            <person name="McSharry B.P."/>
            <person name="Wilkinson G.W.G."/>
            <person name="Davison A.J."/>
        </authorList>
    </citation>
    <scope>NUCLEOTIDE SEQUENCE [LARGE SCALE GENOMIC DNA]</scope>
</reference>